<keyword id="KW-0227">DNA damage</keyword>
<keyword id="KW-0234">DNA repair</keyword>
<keyword id="KW-0255">Endonuclease</keyword>
<keyword id="KW-0378">Hydrolase</keyword>
<keyword id="KW-0479">Metal-binding</keyword>
<keyword id="KW-0540">Nuclease</keyword>
<keyword id="KW-1185">Reference proteome</keyword>
<keyword id="KW-0862">Zinc</keyword>
<protein>
    <recommendedName>
        <fullName evidence="1">Probable endonuclease 4</fullName>
        <ecNumber evidence="1">3.1.21.2</ecNumber>
    </recommendedName>
    <alternativeName>
        <fullName evidence="1">Endodeoxyribonuclease IV</fullName>
    </alternativeName>
    <alternativeName>
        <fullName evidence="1">Endonuclease IV</fullName>
    </alternativeName>
</protein>
<gene>
    <name evidence="1" type="primary">nfo</name>
    <name type="ordered locus">PERMA_1509</name>
</gene>
<comment type="function">
    <text evidence="1">Endonuclease IV plays a role in DNA repair. It cleaves phosphodiester bonds at apurinic or apyrimidinic (AP) sites, generating a 3'-hydroxyl group and a 5'-terminal sugar phosphate.</text>
</comment>
<comment type="catalytic activity">
    <reaction evidence="1">
        <text>Endonucleolytic cleavage to 5'-phosphooligonucleotide end-products.</text>
        <dbReference type="EC" id="3.1.21.2"/>
    </reaction>
</comment>
<comment type="cofactor">
    <cofactor evidence="1">
        <name>Zn(2+)</name>
        <dbReference type="ChEBI" id="CHEBI:29105"/>
    </cofactor>
    <text evidence="1">Binds 3 Zn(2+) ions.</text>
</comment>
<comment type="similarity">
    <text evidence="1">Belongs to the AP endonuclease 2 family.</text>
</comment>
<sequence>MVKIGAHVSSSKSLDLVFDRGREIGADTIQFFLSSPRSWHWKERSDEEKELFIQKRRETGISPVIAHSSYLFNLASSDPVLRKKSINGVIRELKLCEELKIDYYVIHAGKSKGLKESEAVKNIIDSVKEIFSKVKLKHTFFLYETLAGQKGEIGKTTDELAQLMEPFKKENTGVCVDTCHIYSAGYKINDEEGFYSYRSELSKKIGLENVKVIHCNDSKTPFNSKRDRHEHIGEGSIGYKGFEFFLNDEYFRRLPFILETPKTADWDIKNMERLRRLIRTAPVAQ</sequence>
<organism>
    <name type="scientific">Persephonella marina (strain DSM 14350 / EX-H1)</name>
    <dbReference type="NCBI Taxonomy" id="123214"/>
    <lineage>
        <taxon>Bacteria</taxon>
        <taxon>Pseudomonadati</taxon>
        <taxon>Aquificota</taxon>
        <taxon>Aquificia</taxon>
        <taxon>Aquificales</taxon>
        <taxon>Hydrogenothermaceae</taxon>
        <taxon>Persephonella</taxon>
    </lineage>
</organism>
<evidence type="ECO:0000255" key="1">
    <source>
        <dbReference type="HAMAP-Rule" id="MF_00152"/>
    </source>
</evidence>
<feature type="chain" id="PRO_1000123335" description="Probable endonuclease 4">
    <location>
        <begin position="1"/>
        <end position="285"/>
    </location>
</feature>
<feature type="binding site" evidence="1">
    <location>
        <position position="67"/>
    </location>
    <ligand>
        <name>Zn(2+)</name>
        <dbReference type="ChEBI" id="CHEBI:29105"/>
        <label>1</label>
    </ligand>
</feature>
<feature type="binding site" evidence="1">
    <location>
        <position position="107"/>
    </location>
    <ligand>
        <name>Zn(2+)</name>
        <dbReference type="ChEBI" id="CHEBI:29105"/>
        <label>1</label>
    </ligand>
</feature>
<feature type="binding site" evidence="1">
    <location>
        <position position="144"/>
    </location>
    <ligand>
        <name>Zn(2+)</name>
        <dbReference type="ChEBI" id="CHEBI:29105"/>
        <label>1</label>
    </ligand>
</feature>
<feature type="binding site" evidence="1">
    <location>
        <position position="144"/>
    </location>
    <ligand>
        <name>Zn(2+)</name>
        <dbReference type="ChEBI" id="CHEBI:29105"/>
        <label>2</label>
    </ligand>
</feature>
<feature type="binding site" evidence="1">
    <location>
        <position position="177"/>
    </location>
    <ligand>
        <name>Zn(2+)</name>
        <dbReference type="ChEBI" id="CHEBI:29105"/>
        <label>2</label>
    </ligand>
</feature>
<feature type="binding site" evidence="1">
    <location>
        <position position="180"/>
    </location>
    <ligand>
        <name>Zn(2+)</name>
        <dbReference type="ChEBI" id="CHEBI:29105"/>
        <label>3</label>
    </ligand>
</feature>
<feature type="binding site" evidence="1">
    <location>
        <position position="214"/>
    </location>
    <ligand>
        <name>Zn(2+)</name>
        <dbReference type="ChEBI" id="CHEBI:29105"/>
        <label>2</label>
    </ligand>
</feature>
<feature type="binding site" evidence="1">
    <location>
        <position position="227"/>
    </location>
    <ligand>
        <name>Zn(2+)</name>
        <dbReference type="ChEBI" id="CHEBI:29105"/>
        <label>3</label>
    </ligand>
</feature>
<feature type="binding site" evidence="1">
    <location>
        <position position="229"/>
    </location>
    <ligand>
        <name>Zn(2+)</name>
        <dbReference type="ChEBI" id="CHEBI:29105"/>
        <label>3</label>
    </ligand>
</feature>
<feature type="binding site" evidence="1">
    <location>
        <position position="259"/>
    </location>
    <ligand>
        <name>Zn(2+)</name>
        <dbReference type="ChEBI" id="CHEBI:29105"/>
        <label>2</label>
    </ligand>
</feature>
<proteinExistence type="inferred from homology"/>
<name>END4_PERMH</name>
<reference key="1">
    <citation type="journal article" date="2009" name="J. Bacteriol.">
        <title>Complete and draft genome sequences of six members of the Aquificales.</title>
        <authorList>
            <person name="Reysenbach A.-L."/>
            <person name="Hamamura N."/>
            <person name="Podar M."/>
            <person name="Griffiths E."/>
            <person name="Ferreira S."/>
            <person name="Hochstein R."/>
            <person name="Heidelberg J."/>
            <person name="Johnson J."/>
            <person name="Mead D."/>
            <person name="Pohorille A."/>
            <person name="Sarmiento M."/>
            <person name="Schweighofer K."/>
            <person name="Seshadri R."/>
            <person name="Voytek M.A."/>
        </authorList>
    </citation>
    <scope>NUCLEOTIDE SEQUENCE [LARGE SCALE GENOMIC DNA]</scope>
    <source>
        <strain>DSM 14350 / EX-H1</strain>
    </source>
</reference>
<dbReference type="EC" id="3.1.21.2" evidence="1"/>
<dbReference type="EMBL" id="CP001230">
    <property type="protein sequence ID" value="ACO03565.1"/>
    <property type="molecule type" value="Genomic_DNA"/>
</dbReference>
<dbReference type="RefSeq" id="WP_012675804.1">
    <property type="nucleotide sequence ID" value="NC_012440.1"/>
</dbReference>
<dbReference type="SMR" id="C0QRI1"/>
<dbReference type="STRING" id="123214.PERMA_1509"/>
<dbReference type="PaxDb" id="123214-PERMA_1509"/>
<dbReference type="KEGG" id="pmx:PERMA_1509"/>
<dbReference type="eggNOG" id="COG0648">
    <property type="taxonomic scope" value="Bacteria"/>
</dbReference>
<dbReference type="HOGENOM" id="CLU_025885_0_1_0"/>
<dbReference type="OrthoDB" id="9805666at2"/>
<dbReference type="Proteomes" id="UP000001366">
    <property type="component" value="Chromosome"/>
</dbReference>
<dbReference type="GO" id="GO:0008833">
    <property type="term" value="F:deoxyribonuclease IV (phage-T4-induced) activity"/>
    <property type="evidence" value="ECO:0007669"/>
    <property type="project" value="UniProtKB-UniRule"/>
</dbReference>
<dbReference type="GO" id="GO:0003677">
    <property type="term" value="F:DNA binding"/>
    <property type="evidence" value="ECO:0007669"/>
    <property type="project" value="InterPro"/>
</dbReference>
<dbReference type="GO" id="GO:0003906">
    <property type="term" value="F:DNA-(apurinic or apyrimidinic site) endonuclease activity"/>
    <property type="evidence" value="ECO:0007669"/>
    <property type="project" value="TreeGrafter"/>
</dbReference>
<dbReference type="GO" id="GO:0008081">
    <property type="term" value="F:phosphoric diester hydrolase activity"/>
    <property type="evidence" value="ECO:0007669"/>
    <property type="project" value="TreeGrafter"/>
</dbReference>
<dbReference type="GO" id="GO:0008270">
    <property type="term" value="F:zinc ion binding"/>
    <property type="evidence" value="ECO:0007669"/>
    <property type="project" value="UniProtKB-UniRule"/>
</dbReference>
<dbReference type="GO" id="GO:0006284">
    <property type="term" value="P:base-excision repair"/>
    <property type="evidence" value="ECO:0007669"/>
    <property type="project" value="TreeGrafter"/>
</dbReference>
<dbReference type="CDD" id="cd00019">
    <property type="entry name" value="AP2Ec"/>
    <property type="match status" value="1"/>
</dbReference>
<dbReference type="FunFam" id="3.20.20.150:FF:000001">
    <property type="entry name" value="Probable endonuclease 4"/>
    <property type="match status" value="1"/>
</dbReference>
<dbReference type="Gene3D" id="3.20.20.150">
    <property type="entry name" value="Divalent-metal-dependent TIM barrel enzymes"/>
    <property type="match status" value="1"/>
</dbReference>
<dbReference type="HAMAP" id="MF_00152">
    <property type="entry name" value="Nfo"/>
    <property type="match status" value="1"/>
</dbReference>
<dbReference type="InterPro" id="IPR001719">
    <property type="entry name" value="AP_endonuc_2"/>
</dbReference>
<dbReference type="InterPro" id="IPR018246">
    <property type="entry name" value="AP_endonuc_F2_Zn_BS"/>
</dbReference>
<dbReference type="InterPro" id="IPR036237">
    <property type="entry name" value="Xyl_isomerase-like_sf"/>
</dbReference>
<dbReference type="InterPro" id="IPR013022">
    <property type="entry name" value="Xyl_isomerase-like_TIM-brl"/>
</dbReference>
<dbReference type="NCBIfam" id="TIGR00587">
    <property type="entry name" value="nfo"/>
    <property type="match status" value="1"/>
</dbReference>
<dbReference type="PANTHER" id="PTHR21445:SF0">
    <property type="entry name" value="APURINIC-APYRIMIDINIC ENDONUCLEASE"/>
    <property type="match status" value="1"/>
</dbReference>
<dbReference type="PANTHER" id="PTHR21445">
    <property type="entry name" value="ENDONUCLEASE IV ENDODEOXYRIBONUCLEASE IV"/>
    <property type="match status" value="1"/>
</dbReference>
<dbReference type="Pfam" id="PF01261">
    <property type="entry name" value="AP_endonuc_2"/>
    <property type="match status" value="1"/>
</dbReference>
<dbReference type="SMART" id="SM00518">
    <property type="entry name" value="AP2Ec"/>
    <property type="match status" value="1"/>
</dbReference>
<dbReference type="SUPFAM" id="SSF51658">
    <property type="entry name" value="Xylose isomerase-like"/>
    <property type="match status" value="1"/>
</dbReference>
<dbReference type="PROSITE" id="PS00730">
    <property type="entry name" value="AP_NUCLEASE_F2_2"/>
    <property type="match status" value="1"/>
</dbReference>
<dbReference type="PROSITE" id="PS00731">
    <property type="entry name" value="AP_NUCLEASE_F2_3"/>
    <property type="match status" value="1"/>
</dbReference>
<dbReference type="PROSITE" id="PS51432">
    <property type="entry name" value="AP_NUCLEASE_F2_4"/>
    <property type="match status" value="1"/>
</dbReference>
<accession>C0QRI1</accession>